<feature type="chain" id="PRO_0000275802" description="Photosystem II reaction center protein I">
    <location>
        <begin position="1"/>
        <end position="38"/>
    </location>
</feature>
<feature type="transmembrane region" description="Helical" evidence="1">
    <location>
        <begin position="4"/>
        <end position="24"/>
    </location>
</feature>
<name>PSBI_OSTTA</name>
<keyword id="KW-0150">Chloroplast</keyword>
<keyword id="KW-0472">Membrane</keyword>
<keyword id="KW-0602">Photosynthesis</keyword>
<keyword id="KW-0604">Photosystem II</keyword>
<keyword id="KW-0934">Plastid</keyword>
<keyword id="KW-0674">Reaction center</keyword>
<keyword id="KW-1185">Reference proteome</keyword>
<keyword id="KW-0793">Thylakoid</keyword>
<keyword id="KW-0812">Transmembrane</keyword>
<keyword id="KW-1133">Transmembrane helix</keyword>
<gene>
    <name evidence="1" type="primary">psbI</name>
    <name type="ordered locus">OtCpg00570</name>
</gene>
<proteinExistence type="inferred from homology"/>
<geneLocation type="chloroplast"/>
<protein>
    <recommendedName>
        <fullName evidence="1">Photosystem II reaction center protein I</fullName>
        <shortName evidence="1">PSII-I</shortName>
    </recommendedName>
    <alternativeName>
        <fullName evidence="1">PSII 4.8 kDa protein</fullName>
    </alternativeName>
</protein>
<comment type="function">
    <text evidence="1">One of the components of the core complex of photosystem II (PSII), required for its stability and/or assembly. PSII is a light-driven water:plastoquinone oxidoreductase that uses light energy to abstract electrons from H(2)O, generating O(2) and a proton gradient subsequently used for ATP formation. It consists of a core antenna complex that captures photons, and an electron transfer chain that converts photonic excitation into a charge separation.</text>
</comment>
<comment type="subunit">
    <text evidence="1">PSII is composed of 1 copy each of membrane proteins PsbA, PsbB, PsbC, PsbD, PsbE, PsbF, PsbH, PsbI, PsbJ, PsbK, PsbL, PsbM, PsbT, PsbX, PsbY, PsbZ, Psb30/Ycf12, at least 3 peripheral proteins of the oxygen-evolving complex and a large number of cofactors. It forms dimeric complexes.</text>
</comment>
<comment type="subcellular location">
    <subcellularLocation>
        <location evidence="1">Plastid</location>
        <location evidence="1">Chloroplast thylakoid membrane</location>
        <topology evidence="1">Single-pass membrane protein</topology>
    </subcellularLocation>
</comment>
<comment type="similarity">
    <text evidence="1">Belongs to the PsbI family.</text>
</comment>
<accession>Q0P3J5</accession>
<organism>
    <name type="scientific">Ostreococcus tauri</name>
    <dbReference type="NCBI Taxonomy" id="70448"/>
    <lineage>
        <taxon>Eukaryota</taxon>
        <taxon>Viridiplantae</taxon>
        <taxon>Chlorophyta</taxon>
        <taxon>Mamiellophyceae</taxon>
        <taxon>Mamiellales</taxon>
        <taxon>Bathycoccaceae</taxon>
        <taxon>Ostreococcus</taxon>
    </lineage>
</organism>
<reference key="1">
    <citation type="journal article" date="2007" name="Mol. Biol. Evol.">
        <title>The complete chloroplast and mitochondrial DNA sequence of Ostreococcus tauri: organelle genomes of the smallest eukaryote are examples of compaction.</title>
        <authorList>
            <person name="Robbens S."/>
            <person name="Derelle E."/>
            <person name="Ferraz C."/>
            <person name="Wuyts J."/>
            <person name="Moreau H."/>
            <person name="Van de Peer Y."/>
        </authorList>
    </citation>
    <scope>NUCLEOTIDE SEQUENCE [LARGE SCALE GENOMIC DNA]</scope>
    <source>
        <strain>OTTH0595</strain>
    </source>
</reference>
<evidence type="ECO:0000255" key="1">
    <source>
        <dbReference type="HAMAP-Rule" id="MF_01316"/>
    </source>
</evidence>
<sequence length="38" mass="4357">MLTLKILVYTVVSFFVSLFIFGFLSNDPGRNPNSKDFE</sequence>
<dbReference type="EMBL" id="CR954199">
    <property type="protein sequence ID" value="CAL36382.1"/>
    <property type="molecule type" value="Genomic_DNA"/>
</dbReference>
<dbReference type="RefSeq" id="YP_717260.1">
    <property type="nucleotide sequence ID" value="NC_008289.1"/>
</dbReference>
<dbReference type="SMR" id="Q0P3J5"/>
<dbReference type="FunCoup" id="Q0P3J5">
    <property type="interactions" value="40"/>
</dbReference>
<dbReference type="STRING" id="70448.Q0P3J5"/>
<dbReference type="GeneID" id="4238887"/>
<dbReference type="KEGG" id="ota:OstapCp57"/>
<dbReference type="eggNOG" id="ENOG502SEUZ">
    <property type="taxonomic scope" value="Eukaryota"/>
</dbReference>
<dbReference type="InParanoid" id="Q0P3J5"/>
<dbReference type="Proteomes" id="UP000009170">
    <property type="component" value="Chloroplast"/>
</dbReference>
<dbReference type="GO" id="GO:0009535">
    <property type="term" value="C:chloroplast thylakoid membrane"/>
    <property type="evidence" value="ECO:0007669"/>
    <property type="project" value="UniProtKB-SubCell"/>
</dbReference>
<dbReference type="GO" id="GO:0009539">
    <property type="term" value="C:photosystem II reaction center"/>
    <property type="evidence" value="ECO:0007669"/>
    <property type="project" value="InterPro"/>
</dbReference>
<dbReference type="GO" id="GO:0015979">
    <property type="term" value="P:photosynthesis"/>
    <property type="evidence" value="ECO:0007669"/>
    <property type="project" value="UniProtKB-UniRule"/>
</dbReference>
<dbReference type="HAMAP" id="MF_01316">
    <property type="entry name" value="PSII_PsbI"/>
    <property type="match status" value="1"/>
</dbReference>
<dbReference type="InterPro" id="IPR003686">
    <property type="entry name" value="PSII_PsbI"/>
</dbReference>
<dbReference type="InterPro" id="IPR037271">
    <property type="entry name" value="PSII_PsbI_sf"/>
</dbReference>
<dbReference type="NCBIfam" id="NF002735">
    <property type="entry name" value="PRK02655.1"/>
    <property type="match status" value="1"/>
</dbReference>
<dbReference type="PANTHER" id="PTHR35772">
    <property type="entry name" value="PHOTOSYSTEM II REACTION CENTER PROTEIN I"/>
    <property type="match status" value="1"/>
</dbReference>
<dbReference type="PANTHER" id="PTHR35772:SF1">
    <property type="entry name" value="PHOTOSYSTEM II REACTION CENTER PROTEIN I"/>
    <property type="match status" value="1"/>
</dbReference>
<dbReference type="Pfam" id="PF02532">
    <property type="entry name" value="PsbI"/>
    <property type="match status" value="1"/>
</dbReference>
<dbReference type="SUPFAM" id="SSF161041">
    <property type="entry name" value="Photosystem II reaction center protein I, PsbI"/>
    <property type="match status" value="1"/>
</dbReference>